<protein>
    <recommendedName>
        <fullName>Vacuolar proton translocating ATPase 100 kDa subunit</fullName>
    </recommendedName>
    <alternativeName>
        <fullName>Clathrin-coated vesicle/synaptic vesicle proton pump 100 kDa subunit</fullName>
    </alternativeName>
    <alternativeName>
        <fullName>Vacuolar ATPase transmembrane subunit</fullName>
    </alternativeName>
</protein>
<name>VATM_DICDI</name>
<comment type="function">
    <text evidence="3">Essential component of the vacuolar proton pump (V-ATPase), a multimeric enzyme that catalyzes the translocation of protons across the membranes. Required for assembly and activity of the V-ATPase. Required in both the contractile vacuole system and the endosomal/lysosomal system. Also required for cytosolic pH regulation.</text>
</comment>
<comment type="subunit">
    <text evidence="1">The V-ATPase is a heteromultimeric enzyme.</text>
</comment>
<comment type="subcellular location">
    <subcellularLocation>
        <location>Cytoplasmic vesicle membrane</location>
        <topology>Multi-pass membrane protein</topology>
    </subcellularLocation>
    <subcellularLocation>
        <location>Endosome membrane</location>
        <topology>Multi-pass membrane protein</topology>
    </subcellularLocation>
    <subcellularLocation>
        <location>Vacuole membrane</location>
        <topology>Multi-pass membrane protein</topology>
    </subcellularLocation>
    <subcellularLocation>
        <location>Lysosome membrane</location>
        <topology>Multi-pass membrane protein</topology>
    </subcellularLocation>
    <text>Found in membrane of contractile vacuole complex, an osmoregulatory organelle.</text>
</comment>
<comment type="disruption phenotype">
    <text evidence="3">Cells show defects in V-ATPase enzyme assembly, endocytic function and cytosolic pH regulation.</text>
</comment>
<comment type="similarity">
    <text evidence="4">Belongs to the V-ATPase 116 kDa subunit family.</text>
</comment>
<comment type="sequence caution" evidence="4">
    <conflict type="erroneous gene model prediction">
        <sequence resource="EMBL-CDS" id="EAL61459"/>
    </conflict>
</comment>
<accession>Q54E04</accession>
<accession>Q23860</accession>
<dbReference type="EMBL" id="U38803">
    <property type="protein sequence ID" value="AAB49621.1"/>
    <property type="molecule type" value="mRNA"/>
</dbReference>
<dbReference type="EMBL" id="AAFI02000186">
    <property type="protein sequence ID" value="EAL61459.1"/>
    <property type="status" value="ALT_SEQ"/>
    <property type="molecule type" value="Genomic_DNA"/>
</dbReference>
<dbReference type="RefSeq" id="XP_629892.1">
    <property type="nucleotide sequence ID" value="XM_629890.1"/>
</dbReference>
<dbReference type="SMR" id="Q54E04"/>
<dbReference type="FunCoup" id="Q54E04">
    <property type="interactions" value="240"/>
</dbReference>
<dbReference type="STRING" id="44689.Q54E04"/>
<dbReference type="GlyGen" id="Q54E04">
    <property type="glycosylation" value="1 site"/>
</dbReference>
<dbReference type="PaxDb" id="44689-DDB0216215"/>
<dbReference type="EnsemblProtists" id="EAL61459">
    <property type="protein sequence ID" value="EAL61459"/>
    <property type="gene ID" value="DDB_G0291858"/>
</dbReference>
<dbReference type="GeneID" id="8628392"/>
<dbReference type="KEGG" id="ddi:DDB_G0291858"/>
<dbReference type="dictyBase" id="DDB_G0291858">
    <property type="gene designation" value="vatM"/>
</dbReference>
<dbReference type="VEuPathDB" id="AmoebaDB:DDB_G0291858"/>
<dbReference type="eggNOG" id="KOG2189">
    <property type="taxonomic scope" value="Eukaryota"/>
</dbReference>
<dbReference type="InParanoid" id="Q54E04"/>
<dbReference type="PhylomeDB" id="Q54E04"/>
<dbReference type="Reactome" id="R-DDI-1222556">
    <property type="pathway name" value="ROS and RNS production in phagocytes"/>
</dbReference>
<dbReference type="Reactome" id="R-DDI-6798695">
    <property type="pathway name" value="Neutrophil degranulation"/>
</dbReference>
<dbReference type="Reactome" id="R-DDI-77387">
    <property type="pathway name" value="Insulin receptor recycling"/>
</dbReference>
<dbReference type="Reactome" id="R-DDI-917977">
    <property type="pathway name" value="Transferrin endocytosis and recycling"/>
</dbReference>
<dbReference type="Reactome" id="R-DDI-9639288">
    <property type="pathway name" value="Amino acids regulate mTORC1"/>
</dbReference>
<dbReference type="PRO" id="PR:Q54E04"/>
<dbReference type="Proteomes" id="UP000002195">
    <property type="component" value="Chromosome 6"/>
</dbReference>
<dbReference type="GO" id="GO:0031164">
    <property type="term" value="C:contractile vacuolar membrane"/>
    <property type="evidence" value="ECO:0000314"/>
    <property type="project" value="dictyBase"/>
</dbReference>
<dbReference type="GO" id="GO:0032009">
    <property type="term" value="C:early phagosome"/>
    <property type="evidence" value="ECO:0000314"/>
    <property type="project" value="dictyBase"/>
</dbReference>
<dbReference type="GO" id="GO:0030139">
    <property type="term" value="C:endocytic vesicle"/>
    <property type="evidence" value="ECO:0000314"/>
    <property type="project" value="dictyBase"/>
</dbReference>
<dbReference type="GO" id="GO:0010008">
    <property type="term" value="C:endosome membrane"/>
    <property type="evidence" value="ECO:0000314"/>
    <property type="project" value="dictyBase"/>
</dbReference>
<dbReference type="GO" id="GO:0005765">
    <property type="term" value="C:lysosomal membrane"/>
    <property type="evidence" value="ECO:0007669"/>
    <property type="project" value="UniProtKB-SubCell"/>
</dbReference>
<dbReference type="GO" id="GO:0005764">
    <property type="term" value="C:lysosome"/>
    <property type="evidence" value="ECO:0000314"/>
    <property type="project" value="dictyBase"/>
</dbReference>
<dbReference type="GO" id="GO:0140220">
    <property type="term" value="C:pathogen-containing vacuole"/>
    <property type="evidence" value="ECO:0000314"/>
    <property type="project" value="dictyBase"/>
</dbReference>
<dbReference type="GO" id="GO:0045335">
    <property type="term" value="C:phagocytic vesicle"/>
    <property type="evidence" value="ECO:0000314"/>
    <property type="project" value="dictyBase"/>
</dbReference>
<dbReference type="GO" id="GO:0030670">
    <property type="term" value="C:phagocytic vesicle membrane"/>
    <property type="evidence" value="ECO:0000314"/>
    <property type="project" value="dictyBase"/>
</dbReference>
<dbReference type="GO" id="GO:0016471">
    <property type="term" value="C:vacuolar proton-transporting V-type ATPase complex"/>
    <property type="evidence" value="ECO:0000314"/>
    <property type="project" value="dictyBase"/>
</dbReference>
<dbReference type="GO" id="GO:0000220">
    <property type="term" value="C:vacuolar proton-transporting V-type ATPase, V0 domain"/>
    <property type="evidence" value="ECO:0007669"/>
    <property type="project" value="InterPro"/>
</dbReference>
<dbReference type="GO" id="GO:0051117">
    <property type="term" value="F:ATPase binding"/>
    <property type="evidence" value="ECO:0000318"/>
    <property type="project" value="GO_Central"/>
</dbReference>
<dbReference type="GO" id="GO:0046961">
    <property type="term" value="F:proton-transporting ATPase activity, rotational mechanism"/>
    <property type="evidence" value="ECO:0007669"/>
    <property type="project" value="InterPro"/>
</dbReference>
<dbReference type="GO" id="GO:0006911">
    <property type="term" value="P:phagocytosis, engulfment"/>
    <property type="evidence" value="ECO:0000315"/>
    <property type="project" value="dictyBase"/>
</dbReference>
<dbReference type="GO" id="GO:0051453">
    <property type="term" value="P:regulation of intracellular pH"/>
    <property type="evidence" value="ECO:0000315"/>
    <property type="project" value="dictyBase"/>
</dbReference>
<dbReference type="GO" id="GO:0007035">
    <property type="term" value="P:vacuolar acidification"/>
    <property type="evidence" value="ECO:0000318"/>
    <property type="project" value="GO_Central"/>
</dbReference>
<dbReference type="InterPro" id="IPR002490">
    <property type="entry name" value="V-ATPase_116kDa_su"/>
</dbReference>
<dbReference type="InterPro" id="IPR026028">
    <property type="entry name" value="V-type_ATPase_116kDa_su_euka"/>
</dbReference>
<dbReference type="PANTHER" id="PTHR11629:SF63">
    <property type="entry name" value="V-TYPE PROTON ATPASE SUBUNIT A"/>
    <property type="match status" value="1"/>
</dbReference>
<dbReference type="PANTHER" id="PTHR11629">
    <property type="entry name" value="VACUOLAR PROTON ATPASES"/>
    <property type="match status" value="1"/>
</dbReference>
<dbReference type="Pfam" id="PF01496">
    <property type="entry name" value="V_ATPase_I"/>
    <property type="match status" value="1"/>
</dbReference>
<dbReference type="PIRSF" id="PIRSF001293">
    <property type="entry name" value="ATP6V0A1"/>
    <property type="match status" value="1"/>
</dbReference>
<organism>
    <name type="scientific">Dictyostelium discoideum</name>
    <name type="common">Social amoeba</name>
    <dbReference type="NCBI Taxonomy" id="44689"/>
    <lineage>
        <taxon>Eukaryota</taxon>
        <taxon>Amoebozoa</taxon>
        <taxon>Evosea</taxon>
        <taxon>Eumycetozoa</taxon>
        <taxon>Dictyostelia</taxon>
        <taxon>Dictyosteliales</taxon>
        <taxon>Dictyosteliaceae</taxon>
        <taxon>Dictyostelium</taxon>
    </lineage>
</organism>
<evidence type="ECO:0000250" key="1"/>
<evidence type="ECO:0000255" key="2"/>
<evidence type="ECO:0000269" key="3">
    <source>
    </source>
</evidence>
<evidence type="ECO:0000305" key="4"/>
<sequence>MSFLRPSIWRSSPMQMVQLFVQIEAAHDTVDELGKLGLIQFLDDNEHVNLFQRNFVNEVKRCDDMEKKLKFFEDQVKKEPKLQKLLPDNMLSVVDDDSQMDELEGRFDELESELKQVNANQETLQRNYNELIQLRHVLTKDSVFFQENPNLIEGEGHEHSARSPLLAEDQHVSEVAKQGVKLGFITGVMNTDKMPQFQRSLWRTTRGNNYVKDARIEEEIIDPQTGEETAKTVFIVFFQGERLQQKIKKICESFGANIYDCPDNSFERSNLLQKVTVRITDLYEVLQRSKDHKRQTLAGIVPRLYSWKKKVLLEKSIYHTMNLFDYDVGRKCLIAKGWTPKDKIEEIQLALRTATTRSGALVPSVLSIIKTEGSPPTHFETNKYTSSFQEIVNAYGIAHYREVNPAVLTIVTFPFLFGVMFGDVGHGALLLLSALGLISLEKKLAGKKLNELIQMPFDGRYVLFLMSLFSIYVGFIYNECFSIPMNIFGSQYNLNSTTGLYTYQHTDRVYPVGVDPLWKGAPNELVYYNSFKMKLSIIFGVVQMSVGICFSLLNYLNQKGPIKIVNILTQFVPQMIFLWSIFGYMSVLIILKWVVPYRSFEVDKVDPPFILPTIIAMFLSPGGTPDVVFFSGQGAVQTALLFLALISIPVMLVIKPLFMKRFHFQEVERKKLGHHEEEHDDEALYTGHHGEEFEMGEVFVHQVIHTIEFVLGAVSNTASYLRLWALSLAHSELSSVFWERILIGQVERGNPFLAFVGFGAWLGASVAVLLLMESLSAFLHALRLHWVEFQNKFYIGDGVRFIPYSATRILSEDDE</sequence>
<gene>
    <name type="primary">vatM</name>
    <name type="ORF">DDB_G0291858</name>
</gene>
<proteinExistence type="evidence at protein level"/>
<reference key="1">
    <citation type="journal article" date="1996" name="J. Cell Sci.">
        <title>The vacuolar proton pump of Dictyostelium discoideum: molecular cloning and analysis of the 100 kDa subunit.</title>
        <authorList>
            <person name="Liu T."/>
            <person name="Clarke M."/>
        </authorList>
    </citation>
    <scope>NUCLEOTIDE SEQUENCE [MRNA]</scope>
    <scope>SUBCELLULAR LOCATION</scope>
</reference>
<reference key="2">
    <citation type="journal article" date="2005" name="Nature">
        <title>The genome of the social amoeba Dictyostelium discoideum.</title>
        <authorList>
            <person name="Eichinger L."/>
            <person name="Pachebat J.A."/>
            <person name="Gloeckner G."/>
            <person name="Rajandream M.A."/>
            <person name="Sucgang R."/>
            <person name="Berriman M."/>
            <person name="Song J."/>
            <person name="Olsen R."/>
            <person name="Szafranski K."/>
            <person name="Xu Q."/>
            <person name="Tunggal B."/>
            <person name="Kummerfeld S."/>
            <person name="Madera M."/>
            <person name="Konfortov B.A."/>
            <person name="Rivero F."/>
            <person name="Bankier A.T."/>
            <person name="Lehmann R."/>
            <person name="Hamlin N."/>
            <person name="Davies R."/>
            <person name="Gaudet P."/>
            <person name="Fey P."/>
            <person name="Pilcher K."/>
            <person name="Chen G."/>
            <person name="Saunders D."/>
            <person name="Sodergren E.J."/>
            <person name="Davis P."/>
            <person name="Kerhornou A."/>
            <person name="Nie X."/>
            <person name="Hall N."/>
            <person name="Anjard C."/>
            <person name="Hemphill L."/>
            <person name="Bason N."/>
            <person name="Farbrother P."/>
            <person name="Desany B."/>
            <person name="Just E."/>
            <person name="Morio T."/>
            <person name="Rost R."/>
            <person name="Churcher C.M."/>
            <person name="Cooper J."/>
            <person name="Haydock S."/>
            <person name="van Driessche N."/>
            <person name="Cronin A."/>
            <person name="Goodhead I."/>
            <person name="Muzny D.M."/>
            <person name="Mourier T."/>
            <person name="Pain A."/>
            <person name="Lu M."/>
            <person name="Harper D."/>
            <person name="Lindsay R."/>
            <person name="Hauser H."/>
            <person name="James K.D."/>
            <person name="Quiles M."/>
            <person name="Madan Babu M."/>
            <person name="Saito T."/>
            <person name="Buchrieser C."/>
            <person name="Wardroper A."/>
            <person name="Felder M."/>
            <person name="Thangavelu M."/>
            <person name="Johnson D."/>
            <person name="Knights A."/>
            <person name="Loulseged H."/>
            <person name="Mungall K.L."/>
            <person name="Oliver K."/>
            <person name="Price C."/>
            <person name="Quail M.A."/>
            <person name="Urushihara H."/>
            <person name="Hernandez J."/>
            <person name="Rabbinowitsch E."/>
            <person name="Steffen D."/>
            <person name="Sanders M."/>
            <person name="Ma J."/>
            <person name="Kohara Y."/>
            <person name="Sharp S."/>
            <person name="Simmonds M.N."/>
            <person name="Spiegler S."/>
            <person name="Tivey A."/>
            <person name="Sugano S."/>
            <person name="White B."/>
            <person name="Walker D."/>
            <person name="Woodward J.R."/>
            <person name="Winckler T."/>
            <person name="Tanaka Y."/>
            <person name="Shaulsky G."/>
            <person name="Schleicher M."/>
            <person name="Weinstock G.M."/>
            <person name="Rosenthal A."/>
            <person name="Cox E.C."/>
            <person name="Chisholm R.L."/>
            <person name="Gibbs R.A."/>
            <person name="Loomis W.F."/>
            <person name="Platzer M."/>
            <person name="Kay R.R."/>
            <person name="Williams J.G."/>
            <person name="Dear P.H."/>
            <person name="Noegel A.A."/>
            <person name="Barrell B.G."/>
            <person name="Kuspa A."/>
        </authorList>
    </citation>
    <scope>NUCLEOTIDE SEQUENCE [LARGE SCALE GENOMIC DNA]</scope>
    <source>
        <strain>AX4</strain>
    </source>
</reference>
<reference key="3">
    <citation type="journal article" date="2002" name="J. Cell Sci.">
        <title>Altered expression of the 100 kDa subunit of the Dictyostelium vacuolar proton pump impairs enzyme assembly, endocytic function and cytosolic pH regulation.</title>
        <authorList>
            <person name="Liu T."/>
            <person name="Mirschberger C."/>
            <person name="Chooback L."/>
            <person name="Arana Q."/>
            <person name="Dal Sacco Z."/>
            <person name="MacWilliams H."/>
            <person name="Clarke M."/>
        </authorList>
    </citation>
    <scope>FUNCTION</scope>
    <scope>DISRUPTION PHENOTYPE</scope>
</reference>
<reference key="4">
    <citation type="journal article" date="2002" name="J. Cell Sci.">
        <title>Dynamics of the vacuolar H(+)-ATPase in the contractile vacuole complex and the endosomal pathway of Dictyostelium cells.</title>
        <authorList>
            <person name="Clarke M."/>
            <person name="Koehler J."/>
            <person name="Arana Q."/>
            <person name="Liu T."/>
            <person name="Heuser J."/>
            <person name="Gerisch G."/>
        </authorList>
    </citation>
    <scope>SUBCELLULAR LOCATION</scope>
    <scope>TOPOLOGY</scope>
</reference>
<reference key="5">
    <citation type="journal article" date="2006" name="Mol. Cell. Proteomics">
        <title>Proteomics fingerprinting of phagosome maturation and evidence for the role of a Galpha during uptake.</title>
        <authorList>
            <person name="Gotthardt D."/>
            <person name="Blancheteau V."/>
            <person name="Bosserhoff A."/>
            <person name="Ruppert T."/>
            <person name="Delorenzi M."/>
            <person name="Soldati T."/>
        </authorList>
    </citation>
    <scope>IDENTIFICATION BY MASS SPECTROMETRY [LARGE SCALE ANALYSIS]</scope>
    <source>
        <strain>AX2</strain>
    </source>
</reference>
<feature type="chain" id="PRO_0000327961" description="Vacuolar proton translocating ATPase 100 kDa subunit">
    <location>
        <begin position="1"/>
        <end position="815"/>
    </location>
</feature>
<feature type="topological domain" description="Cytoplasmic" evidence="2">
    <location>
        <begin position="1"/>
        <end position="402"/>
    </location>
</feature>
<feature type="transmembrane region" description="Helical" evidence="2">
    <location>
        <begin position="403"/>
        <end position="421"/>
    </location>
</feature>
<feature type="topological domain" description="Vacuolar" evidence="2">
    <location>
        <begin position="422"/>
        <end position="423"/>
    </location>
</feature>
<feature type="transmembrane region" description="Helical" evidence="2">
    <location>
        <begin position="424"/>
        <end position="440"/>
    </location>
</feature>
<feature type="topological domain" description="Cytoplasmic" evidence="2">
    <location>
        <begin position="441"/>
        <end position="454"/>
    </location>
</feature>
<feature type="transmembrane region" description="Helical" evidence="2">
    <location>
        <begin position="455"/>
        <end position="484"/>
    </location>
</feature>
<feature type="topological domain" description="Vacuolar" evidence="2">
    <location>
        <begin position="485"/>
        <end position="530"/>
    </location>
</feature>
<feature type="transmembrane region" description="Helical" evidence="2">
    <location>
        <begin position="531"/>
        <end position="550"/>
    </location>
</feature>
<feature type="topological domain" description="Cytoplasmic" evidence="2">
    <location>
        <begin position="551"/>
        <end position="571"/>
    </location>
</feature>
<feature type="transmembrane region" description="Helical" evidence="2">
    <location>
        <begin position="572"/>
        <end position="592"/>
    </location>
</feature>
<feature type="topological domain" description="Vacuolar" evidence="2">
    <location>
        <begin position="593"/>
        <end position="639"/>
    </location>
</feature>
<feature type="transmembrane region" description="Helical" evidence="2">
    <location>
        <begin position="640"/>
        <end position="659"/>
    </location>
</feature>
<feature type="topological domain" description="Cytoplasmic" evidence="2">
    <location>
        <begin position="660"/>
        <end position="706"/>
    </location>
</feature>
<feature type="transmembrane region" description="Helical" evidence="2">
    <location>
        <begin position="707"/>
        <end position="731"/>
    </location>
</feature>
<feature type="topological domain" description="Vacuolar" evidence="2">
    <location>
        <begin position="732"/>
        <end position="749"/>
    </location>
</feature>
<feature type="transmembrane region" description="Helical" evidence="2">
    <location>
        <begin position="750"/>
        <end position="788"/>
    </location>
</feature>
<feature type="topological domain" description="Cytoplasmic" evidence="2">
    <location>
        <begin position="789"/>
        <end position="815"/>
    </location>
</feature>
<feature type="sequence conflict" description="In Ref. 1; AAB49621." evidence="4" ref="1">
    <original>Q</original>
    <variation>L</variation>
    <location>
        <position position="170"/>
    </location>
</feature>
<keyword id="KW-0968">Cytoplasmic vesicle</keyword>
<keyword id="KW-0967">Endosome</keyword>
<keyword id="KW-0375">Hydrogen ion transport</keyword>
<keyword id="KW-0406">Ion transport</keyword>
<keyword id="KW-0458">Lysosome</keyword>
<keyword id="KW-0472">Membrane</keyword>
<keyword id="KW-1185">Reference proteome</keyword>
<keyword id="KW-0812">Transmembrane</keyword>
<keyword id="KW-1133">Transmembrane helix</keyword>
<keyword id="KW-0813">Transport</keyword>
<keyword id="KW-0926">Vacuole</keyword>